<organism>
    <name type="scientific">Crotalus horridus</name>
    <name type="common">Timber rattlesnake</name>
    <dbReference type="NCBI Taxonomy" id="35024"/>
    <lineage>
        <taxon>Eukaryota</taxon>
        <taxon>Metazoa</taxon>
        <taxon>Chordata</taxon>
        <taxon>Craniata</taxon>
        <taxon>Vertebrata</taxon>
        <taxon>Euteleostomi</taxon>
        <taxon>Lepidosauria</taxon>
        <taxon>Squamata</taxon>
        <taxon>Bifurcata</taxon>
        <taxon>Unidentata</taxon>
        <taxon>Episquamata</taxon>
        <taxon>Toxicofera</taxon>
        <taxon>Serpentes</taxon>
        <taxon>Colubroidea</taxon>
        <taxon>Viperidae</taxon>
        <taxon>Crotalinae</taxon>
        <taxon>Crotalus</taxon>
    </lineage>
</organism>
<reference key="1">
    <citation type="journal article" date="2010" name="Toxicon">
        <title>Absence of phospholipase A(2) in most Crotalus horridus venom due to translation blockage: comparison with Crotalus horridus atricaudatus venom.</title>
        <authorList>
            <person name="Wang Y.-M."/>
            <person name="Parmelee J."/>
            <person name="Guo Y.-W."/>
            <person name="Tsai I.-H."/>
        </authorList>
    </citation>
    <scope>NUCLEOTIDE SEQUENCE [MRNA]</scope>
    <scope>IDENTIFICATION BY MASS SPECTROMETRY</scope>
    <source>
        <strain>Iowa</strain>
        <strain>South Carolina</strain>
        <tissue>Venom</tissue>
        <tissue>Venom gland</tissue>
    </source>
</reference>
<dbReference type="EC" id="3.1.1.4"/>
<dbReference type="EMBL" id="GQ168369">
    <property type="protein sequence ID" value="ADD62450.1"/>
    <property type="molecule type" value="mRNA"/>
</dbReference>
<dbReference type="EMBL" id="GQ168368">
    <property type="protein sequence ID" value="ADD62449.1"/>
    <property type="molecule type" value="mRNA"/>
</dbReference>
<dbReference type="SMR" id="D6MKR0"/>
<dbReference type="GO" id="GO:0005576">
    <property type="term" value="C:extracellular region"/>
    <property type="evidence" value="ECO:0007669"/>
    <property type="project" value="UniProtKB-SubCell"/>
</dbReference>
<dbReference type="GO" id="GO:0005509">
    <property type="term" value="F:calcium ion binding"/>
    <property type="evidence" value="ECO:0007669"/>
    <property type="project" value="InterPro"/>
</dbReference>
<dbReference type="GO" id="GO:0047498">
    <property type="term" value="F:calcium-dependent phospholipase A2 activity"/>
    <property type="evidence" value="ECO:0007669"/>
    <property type="project" value="TreeGrafter"/>
</dbReference>
<dbReference type="GO" id="GO:0005543">
    <property type="term" value="F:phospholipid binding"/>
    <property type="evidence" value="ECO:0007669"/>
    <property type="project" value="TreeGrafter"/>
</dbReference>
<dbReference type="GO" id="GO:0090729">
    <property type="term" value="F:toxin activity"/>
    <property type="evidence" value="ECO:0007669"/>
    <property type="project" value="UniProtKB-KW"/>
</dbReference>
<dbReference type="GO" id="GO:0050482">
    <property type="term" value="P:arachidonate secretion"/>
    <property type="evidence" value="ECO:0007669"/>
    <property type="project" value="InterPro"/>
</dbReference>
<dbReference type="GO" id="GO:0016042">
    <property type="term" value="P:lipid catabolic process"/>
    <property type="evidence" value="ECO:0007669"/>
    <property type="project" value="UniProtKB-KW"/>
</dbReference>
<dbReference type="GO" id="GO:0042130">
    <property type="term" value="P:negative regulation of T cell proliferation"/>
    <property type="evidence" value="ECO:0007669"/>
    <property type="project" value="TreeGrafter"/>
</dbReference>
<dbReference type="GO" id="GO:0006644">
    <property type="term" value="P:phospholipid metabolic process"/>
    <property type="evidence" value="ECO:0007669"/>
    <property type="project" value="InterPro"/>
</dbReference>
<dbReference type="CDD" id="cd00125">
    <property type="entry name" value="PLA2c"/>
    <property type="match status" value="1"/>
</dbReference>
<dbReference type="FunFam" id="1.20.90.10:FF:000001">
    <property type="entry name" value="Basic phospholipase A2 homolog"/>
    <property type="match status" value="1"/>
</dbReference>
<dbReference type="Gene3D" id="1.20.90.10">
    <property type="entry name" value="Phospholipase A2 domain"/>
    <property type="match status" value="1"/>
</dbReference>
<dbReference type="InterPro" id="IPR001211">
    <property type="entry name" value="PLipase_A2"/>
</dbReference>
<dbReference type="InterPro" id="IPR033112">
    <property type="entry name" value="PLipase_A2_Asp_AS"/>
</dbReference>
<dbReference type="InterPro" id="IPR016090">
    <property type="entry name" value="PLipase_A2_dom"/>
</dbReference>
<dbReference type="InterPro" id="IPR036444">
    <property type="entry name" value="PLipase_A2_dom_sf"/>
</dbReference>
<dbReference type="InterPro" id="IPR033113">
    <property type="entry name" value="PLipase_A2_His_AS"/>
</dbReference>
<dbReference type="PANTHER" id="PTHR11716">
    <property type="entry name" value="PHOSPHOLIPASE A2 FAMILY MEMBER"/>
    <property type="match status" value="1"/>
</dbReference>
<dbReference type="PANTHER" id="PTHR11716:SF9">
    <property type="entry name" value="PHOSPHOLIPASE A2, MEMBRANE ASSOCIATED"/>
    <property type="match status" value="1"/>
</dbReference>
<dbReference type="Pfam" id="PF00068">
    <property type="entry name" value="Phospholip_A2_1"/>
    <property type="match status" value="1"/>
</dbReference>
<dbReference type="PRINTS" id="PR00389">
    <property type="entry name" value="PHPHLIPASEA2"/>
</dbReference>
<dbReference type="SMART" id="SM00085">
    <property type="entry name" value="PA2c"/>
    <property type="match status" value="1"/>
</dbReference>
<dbReference type="SUPFAM" id="SSF48619">
    <property type="entry name" value="Phospholipase A2, PLA2"/>
    <property type="match status" value="1"/>
</dbReference>
<dbReference type="PROSITE" id="PS00119">
    <property type="entry name" value="PA2_ASP"/>
    <property type="match status" value="1"/>
</dbReference>
<dbReference type="PROSITE" id="PS00118">
    <property type="entry name" value="PA2_HIS"/>
    <property type="match status" value="1"/>
</dbReference>
<name>PA2A6_CROHD</name>
<sequence>MRTLWIVAVLLLGVEGSLVQFEMMIMEVAKRSGLLWYSAYGCYCGWGGHGRPQDATDRCCFVHDCCYGKATDCNPKRVSYTYSEENGEIVCGGDDPCGTQICECDKAAAICFRDNIPSYDNKYWLFPPKNCQEEPEPC</sequence>
<accession>D6MKR0</accession>
<accession>D6MKQ9</accession>
<proteinExistence type="evidence at protein level"/>
<protein>
    <recommendedName>
        <fullName>Acidic phospholipase A2 CH-E6'</fullName>
        <shortName>svPLA2</shortName>
        <ecNumber>3.1.1.4</ecNumber>
    </recommendedName>
    <alternativeName>
        <fullName>CH-E6</fullName>
    </alternativeName>
    <alternativeName>
        <fullName>Phosphatidylcholine 2-acylhydrolase</fullName>
    </alternativeName>
</protein>
<comment type="function">
    <text evidence="1">Snake venom phospholipase A2 (PLA2) that shows high lipolytic and weak ADP-induced platelet aggregation activities. Also shows weak anticoagulant activity. PLA2 catalyzes the calcium-dependent hydrolysis of the 2-acyl groups in 3-sn-phosphoglycerides (By similarity).</text>
</comment>
<comment type="catalytic activity">
    <reaction evidence="4 5">
        <text>a 1,2-diacyl-sn-glycero-3-phosphocholine + H2O = a 1-acyl-sn-glycero-3-phosphocholine + a fatty acid + H(+)</text>
        <dbReference type="Rhea" id="RHEA:15801"/>
        <dbReference type="ChEBI" id="CHEBI:15377"/>
        <dbReference type="ChEBI" id="CHEBI:15378"/>
        <dbReference type="ChEBI" id="CHEBI:28868"/>
        <dbReference type="ChEBI" id="CHEBI:57643"/>
        <dbReference type="ChEBI" id="CHEBI:58168"/>
        <dbReference type="EC" id="3.1.1.4"/>
    </reaction>
</comment>
<comment type="cofactor">
    <cofactor evidence="1">
        <name>Ca(2+)</name>
        <dbReference type="ChEBI" id="CHEBI:29108"/>
    </cofactor>
    <text evidence="1">Binds 1 Ca(2+) ion.</text>
</comment>
<comment type="subcellular location">
    <subcellularLocation>
        <location>Secreted</location>
    </subcellularLocation>
</comment>
<comment type="tissue specificity">
    <text>Expressed by the venom gland.</text>
</comment>
<comment type="miscellaneous">
    <text>The subspecies C.h.atricaudatus mentioned in PubMed:20347857 is currently considered invalid. However, since different origins of specimens explain sequence variations, the specimen origins are indicated under strain in the reference section (in PubMed:20347857, Iowa also refers to C.horridus and South Carolina to C.h.atricaudatus).</text>
</comment>
<comment type="similarity">
    <text evidence="6">Belongs to the phospholipase A2 family. Group II subfamily. D49 sub-subfamily.</text>
</comment>
<comment type="caution">
    <text evidence="6">A venom protein (not sequenced) was found in the specimen of from South Carolina, whereas no venom protein was found in the specimen from Iowa.</text>
</comment>
<keyword id="KW-1203">Blood coagulation cascade inhibiting toxin</keyword>
<keyword id="KW-0106">Calcium</keyword>
<keyword id="KW-1015">Disulfide bond</keyword>
<keyword id="KW-1199">Hemostasis impairing toxin</keyword>
<keyword id="KW-0378">Hydrolase</keyword>
<keyword id="KW-0442">Lipid degradation</keyword>
<keyword id="KW-0443">Lipid metabolism</keyword>
<keyword id="KW-0479">Metal-binding</keyword>
<keyword id="KW-1201">Platelet aggregation inhibiting toxin</keyword>
<keyword id="KW-0964">Secreted</keyword>
<keyword id="KW-0732">Signal</keyword>
<keyword id="KW-0800">Toxin</keyword>
<evidence type="ECO:0000250" key="1"/>
<evidence type="ECO:0000250" key="2">
    <source>
        <dbReference type="UniProtKB" id="O42191"/>
    </source>
</evidence>
<evidence type="ECO:0000250" key="3">
    <source>
        <dbReference type="UniProtKB" id="P06859"/>
    </source>
</evidence>
<evidence type="ECO:0000255" key="4">
    <source>
        <dbReference type="PROSITE-ProRule" id="PRU10035"/>
    </source>
</evidence>
<evidence type="ECO:0000255" key="5">
    <source>
        <dbReference type="PROSITE-ProRule" id="PRU10036"/>
    </source>
</evidence>
<evidence type="ECO:0000305" key="6"/>
<feature type="signal peptide" evidence="1">
    <location>
        <begin position="1"/>
        <end position="16"/>
    </location>
</feature>
<feature type="chain" id="PRO_0000419284" description="Acidic phospholipase A2 CH-E6'">
    <location>
        <begin position="17"/>
        <end position="138"/>
    </location>
</feature>
<feature type="active site" evidence="3">
    <location>
        <position position="63"/>
    </location>
</feature>
<feature type="active site" evidence="3">
    <location>
        <position position="105"/>
    </location>
</feature>
<feature type="binding site" evidence="2">
    <location>
        <position position="43"/>
    </location>
    <ligand>
        <name>Ca(2+)</name>
        <dbReference type="ChEBI" id="CHEBI:29108"/>
    </ligand>
</feature>
<feature type="binding site" evidence="2">
    <location>
        <position position="45"/>
    </location>
    <ligand>
        <name>Ca(2+)</name>
        <dbReference type="ChEBI" id="CHEBI:29108"/>
    </ligand>
</feature>
<feature type="binding site" evidence="2">
    <location>
        <position position="47"/>
    </location>
    <ligand>
        <name>Ca(2+)</name>
        <dbReference type="ChEBI" id="CHEBI:29108"/>
    </ligand>
</feature>
<feature type="binding site" evidence="2">
    <location>
        <position position="64"/>
    </location>
    <ligand>
        <name>Ca(2+)</name>
        <dbReference type="ChEBI" id="CHEBI:29108"/>
    </ligand>
</feature>
<feature type="disulfide bond" evidence="2">
    <location>
        <begin position="42"/>
        <end position="131"/>
    </location>
</feature>
<feature type="disulfide bond" evidence="2">
    <location>
        <begin position="44"/>
        <end position="60"/>
    </location>
</feature>
<feature type="disulfide bond" evidence="2">
    <location>
        <begin position="59"/>
        <end position="111"/>
    </location>
</feature>
<feature type="disulfide bond" evidence="2">
    <location>
        <begin position="65"/>
        <end position="138"/>
    </location>
</feature>
<feature type="disulfide bond" evidence="2">
    <location>
        <begin position="66"/>
        <end position="104"/>
    </location>
</feature>
<feature type="disulfide bond" evidence="2">
    <location>
        <begin position="73"/>
        <end position="97"/>
    </location>
</feature>
<feature type="disulfide bond" evidence="2">
    <location>
        <begin position="91"/>
        <end position="102"/>
    </location>
</feature>
<feature type="sequence variant" description="In Strain: Iowa) (CH-E6.">
    <original>Q</original>
    <variation>R</variation>
    <location>
        <position position="132"/>
    </location>
</feature>